<proteinExistence type="inferred from homology"/>
<gene>
    <name evidence="1" type="primary">EFM7</name>
    <name type="synonym">NNT1</name>
    <name type="ordered locus">CNG02680</name>
</gene>
<feature type="chain" id="PRO_0000096893" description="Protein N-terminal and lysine N-methyltransferase EFM7">
    <location>
        <begin position="1"/>
        <end position="300"/>
    </location>
</feature>
<feature type="binding site" evidence="1">
    <location>
        <position position="75"/>
    </location>
    <ligand>
        <name>S-adenosyl-L-methionine</name>
        <dbReference type="ChEBI" id="CHEBI:59789"/>
    </ligand>
</feature>
<feature type="binding site" evidence="1">
    <location>
        <begin position="101"/>
        <end position="103"/>
    </location>
    <ligand>
        <name>S-adenosyl-L-methionine</name>
        <dbReference type="ChEBI" id="CHEBI:59789"/>
    </ligand>
</feature>
<feature type="binding site" evidence="1">
    <location>
        <position position="123"/>
    </location>
    <ligand>
        <name>S-adenosyl-L-methionine</name>
        <dbReference type="ChEBI" id="CHEBI:59789"/>
    </ligand>
</feature>
<feature type="binding site" evidence="1">
    <location>
        <position position="156"/>
    </location>
    <ligand>
        <name>S-adenosyl-L-methionine</name>
        <dbReference type="ChEBI" id="CHEBI:59789"/>
    </ligand>
</feature>
<feature type="binding site" evidence="1">
    <location>
        <position position="179"/>
    </location>
    <ligand>
        <name>S-adenosyl-L-methionine</name>
        <dbReference type="ChEBI" id="CHEBI:59789"/>
    </ligand>
</feature>
<reference key="1">
    <citation type="journal article" date="2005" name="Science">
        <title>The genome of the basidiomycetous yeast and human pathogen Cryptococcus neoformans.</title>
        <authorList>
            <person name="Loftus B.J."/>
            <person name="Fung E."/>
            <person name="Roncaglia P."/>
            <person name="Rowley D."/>
            <person name="Amedeo P."/>
            <person name="Bruno D."/>
            <person name="Vamathevan J."/>
            <person name="Miranda M."/>
            <person name="Anderson I.J."/>
            <person name="Fraser J.A."/>
            <person name="Allen J.E."/>
            <person name="Bosdet I.E."/>
            <person name="Brent M.R."/>
            <person name="Chiu R."/>
            <person name="Doering T.L."/>
            <person name="Donlin M.J."/>
            <person name="D'Souza C.A."/>
            <person name="Fox D.S."/>
            <person name="Grinberg V."/>
            <person name="Fu J."/>
            <person name="Fukushima M."/>
            <person name="Haas B.J."/>
            <person name="Huang J.C."/>
            <person name="Janbon G."/>
            <person name="Jones S.J.M."/>
            <person name="Koo H.L."/>
            <person name="Krzywinski M.I."/>
            <person name="Kwon-Chung K.J."/>
            <person name="Lengeler K.B."/>
            <person name="Maiti R."/>
            <person name="Marra M.A."/>
            <person name="Marra R.E."/>
            <person name="Mathewson C.A."/>
            <person name="Mitchell T.G."/>
            <person name="Pertea M."/>
            <person name="Riggs F.R."/>
            <person name="Salzberg S.L."/>
            <person name="Schein J.E."/>
            <person name="Shvartsbeyn A."/>
            <person name="Shin H."/>
            <person name="Shumway M."/>
            <person name="Specht C.A."/>
            <person name="Suh B.B."/>
            <person name="Tenney A."/>
            <person name="Utterback T.R."/>
            <person name="Wickes B.L."/>
            <person name="Wortman J.R."/>
            <person name="Wye N.H."/>
            <person name="Kronstad J.W."/>
            <person name="Lodge J.K."/>
            <person name="Heitman J."/>
            <person name="Davis R.W."/>
            <person name="Fraser C.M."/>
            <person name="Hyman R.W."/>
        </authorList>
    </citation>
    <scope>NUCLEOTIDE SEQUENCE [LARGE SCALE GENOMIC DNA]</scope>
    <source>
        <strain>JEC21 / ATCC MYA-565</strain>
    </source>
</reference>
<protein>
    <recommendedName>
        <fullName evidence="1">Protein N-terminal and lysine N-methyltransferase EFM7</fullName>
        <ecNumber evidence="1">2.1.1.-</ecNumber>
    </recommendedName>
    <alternativeName>
        <fullName evidence="1">Elongation factor methyltransferase 7</fullName>
    </alternativeName>
</protein>
<keyword id="KW-0963">Cytoplasm</keyword>
<keyword id="KW-0489">Methyltransferase</keyword>
<keyword id="KW-1185">Reference proteome</keyword>
<keyword id="KW-0949">S-adenosyl-L-methionine</keyword>
<keyword id="KW-0808">Transferase</keyword>
<dbReference type="EC" id="2.1.1.-" evidence="1"/>
<dbReference type="EMBL" id="AE017347">
    <property type="protein sequence ID" value="AAW44624.2"/>
    <property type="molecule type" value="Genomic_DNA"/>
</dbReference>
<dbReference type="RefSeq" id="XP_571931.1">
    <property type="nucleotide sequence ID" value="XM_571931.1"/>
</dbReference>
<dbReference type="SMR" id="P0CP44"/>
<dbReference type="FunCoup" id="P0CP44">
    <property type="interactions" value="126"/>
</dbReference>
<dbReference type="STRING" id="214684.P0CP44"/>
<dbReference type="PaxDb" id="214684-P0CP44"/>
<dbReference type="eggNOG" id="KOG2920">
    <property type="taxonomic scope" value="Eukaryota"/>
</dbReference>
<dbReference type="InParanoid" id="P0CP44"/>
<dbReference type="Proteomes" id="UP000002149">
    <property type="component" value="Chromosome 7"/>
</dbReference>
<dbReference type="GO" id="GO:0005737">
    <property type="term" value="C:cytoplasm"/>
    <property type="evidence" value="ECO:0007669"/>
    <property type="project" value="UniProtKB-SubCell"/>
</dbReference>
<dbReference type="GO" id="GO:0071885">
    <property type="term" value="F:N-terminal protein N-methyltransferase activity"/>
    <property type="evidence" value="ECO:0007669"/>
    <property type="project" value="UniProtKB-UniRule"/>
</dbReference>
<dbReference type="GO" id="GO:0008276">
    <property type="term" value="F:protein methyltransferase activity"/>
    <property type="evidence" value="ECO:0000318"/>
    <property type="project" value="GO_Central"/>
</dbReference>
<dbReference type="GO" id="GO:0016279">
    <property type="term" value="F:protein-lysine N-methyltransferase activity"/>
    <property type="evidence" value="ECO:0007669"/>
    <property type="project" value="UniProtKB-UniRule"/>
</dbReference>
<dbReference type="GO" id="GO:0032259">
    <property type="term" value="P:methylation"/>
    <property type="evidence" value="ECO:0007669"/>
    <property type="project" value="UniProtKB-KW"/>
</dbReference>
<dbReference type="CDD" id="cd02440">
    <property type="entry name" value="AdoMet_MTases"/>
    <property type="match status" value="1"/>
</dbReference>
<dbReference type="Gene3D" id="3.40.50.150">
    <property type="entry name" value="Vaccinia Virus protein VP39"/>
    <property type="match status" value="1"/>
</dbReference>
<dbReference type="HAMAP" id="MF_03223">
    <property type="entry name" value="Methyltr_EFM7"/>
    <property type="match status" value="1"/>
</dbReference>
<dbReference type="InterPro" id="IPR025784">
    <property type="entry name" value="EFM7"/>
</dbReference>
<dbReference type="InterPro" id="IPR019410">
    <property type="entry name" value="Methyltransf_16"/>
</dbReference>
<dbReference type="InterPro" id="IPR029063">
    <property type="entry name" value="SAM-dependent_MTases_sf"/>
</dbReference>
<dbReference type="PANTHER" id="PTHR14614">
    <property type="entry name" value="HEPATOCELLULAR CARCINOMA-ASSOCIATED ANTIGEN"/>
    <property type="match status" value="1"/>
</dbReference>
<dbReference type="PANTHER" id="PTHR14614:SF10">
    <property type="entry name" value="PROTEIN N-TERMINAL AND LYSINE N-METHYLTRANSFERASE EFM7"/>
    <property type="match status" value="1"/>
</dbReference>
<dbReference type="Pfam" id="PF10294">
    <property type="entry name" value="Methyltransf_16"/>
    <property type="match status" value="1"/>
</dbReference>
<dbReference type="SUPFAM" id="SSF53335">
    <property type="entry name" value="S-adenosyl-L-methionine-dependent methyltransferases"/>
    <property type="match status" value="1"/>
</dbReference>
<dbReference type="PROSITE" id="PS51560">
    <property type="entry name" value="SAM_MT_NNT1"/>
    <property type="match status" value="1"/>
</dbReference>
<organism>
    <name type="scientific">Cryptococcus neoformans var. neoformans serotype D (strain JEC21 / ATCC MYA-565)</name>
    <name type="common">Filobasidiella neoformans</name>
    <dbReference type="NCBI Taxonomy" id="214684"/>
    <lineage>
        <taxon>Eukaryota</taxon>
        <taxon>Fungi</taxon>
        <taxon>Dikarya</taxon>
        <taxon>Basidiomycota</taxon>
        <taxon>Agaricomycotina</taxon>
        <taxon>Tremellomycetes</taxon>
        <taxon>Tremellales</taxon>
        <taxon>Cryptococcaceae</taxon>
        <taxon>Cryptococcus</taxon>
        <taxon>Cryptococcus neoformans species complex</taxon>
    </lineage>
</organism>
<name>EFM7_CRYNJ</name>
<sequence length="300" mass="33487">MSQDPILTSKGSQEEEEDFFGLDNFFPEPESPLPPPFSFASYDIPANIDFYVPDHRKSLILRLVGSHPLWGHHLWNTARTLSTYLLETPQITQSRHVLELGAGAGLPSIVCVLAGSSKVIVTDYSDEGLLDNLRFNVDVNLEGEEKERIAVDGHVWGQSVDPLLGHLPKGQKYDLLILSDLVFNHSQHDALIKTVEATLTSSSTQSYDPSNPSAPLTEPSILVFFTHHRPHLAHADMAFFPRLAESGNGWAYEKVVEEWAGAMFENDPGDKKVRGTVHGWRAWRVRDGEERGEKPSRISL</sequence>
<accession>P0CP44</accession>
<accession>Q55PK4</accession>
<accession>Q5KDV2</accession>
<evidence type="ECO:0000255" key="1">
    <source>
        <dbReference type="HAMAP-Rule" id="MF_03223"/>
    </source>
</evidence>
<comment type="function">
    <text evidence="1">S-adenosyl-L-methionine-dependent protein methyltransferase that trimethylates the N-terminal glycine 'Gly-2' of elongation factor 1-alpha, before also catalyzing the mono- and dimethylation of 'Lys-3'.</text>
</comment>
<comment type="subcellular location">
    <subcellularLocation>
        <location evidence="1">Cytoplasm</location>
    </subcellularLocation>
</comment>
<comment type="similarity">
    <text evidence="1">Belongs to the class I-like SAM-binding methyltransferase superfamily. EFM7 family.</text>
</comment>